<sequence length="196" mass="21480">MSSIKLIVGLANPGAEYAQTRHNAGAWYVDLLAQRHNQQLKEESKFYGYTARLNLAGNDVRLLVPTTFMNLSGKAVLAMANFYRIEPDEILVAHDELDIPPGVAKIKLGGGNGGHNGLKDIQSKFGNNPNFYRLRIGIGHPGDKNKVVGFVLGKPPASEQKMIDEAIDEAARCTEILLTDGLEKTVRRLHSFKAQA</sequence>
<protein>
    <recommendedName>
        <fullName evidence="1">Peptidyl-tRNA hydrolase</fullName>
        <shortName evidence="1">Pth</shortName>
        <ecNumber evidence="1">3.1.1.29</ecNumber>
    </recommendedName>
</protein>
<organism>
    <name type="scientific">Serratia proteamaculans (strain 568)</name>
    <dbReference type="NCBI Taxonomy" id="399741"/>
    <lineage>
        <taxon>Bacteria</taxon>
        <taxon>Pseudomonadati</taxon>
        <taxon>Pseudomonadota</taxon>
        <taxon>Gammaproteobacteria</taxon>
        <taxon>Enterobacterales</taxon>
        <taxon>Yersiniaceae</taxon>
        <taxon>Serratia</taxon>
    </lineage>
</organism>
<dbReference type="EC" id="3.1.1.29" evidence="1"/>
<dbReference type="EMBL" id="CP000826">
    <property type="protein sequence ID" value="ABV41087.1"/>
    <property type="molecule type" value="Genomic_DNA"/>
</dbReference>
<dbReference type="SMR" id="A8GD97"/>
<dbReference type="STRING" id="399741.Spro_1984"/>
<dbReference type="KEGG" id="spe:Spro_1984"/>
<dbReference type="eggNOG" id="COG0193">
    <property type="taxonomic scope" value="Bacteria"/>
</dbReference>
<dbReference type="HOGENOM" id="CLU_062456_3_1_6"/>
<dbReference type="OrthoDB" id="9800507at2"/>
<dbReference type="GO" id="GO:0005737">
    <property type="term" value="C:cytoplasm"/>
    <property type="evidence" value="ECO:0007669"/>
    <property type="project" value="UniProtKB-SubCell"/>
</dbReference>
<dbReference type="GO" id="GO:0004045">
    <property type="term" value="F:peptidyl-tRNA hydrolase activity"/>
    <property type="evidence" value="ECO:0007669"/>
    <property type="project" value="UniProtKB-UniRule"/>
</dbReference>
<dbReference type="GO" id="GO:0000049">
    <property type="term" value="F:tRNA binding"/>
    <property type="evidence" value="ECO:0007669"/>
    <property type="project" value="UniProtKB-UniRule"/>
</dbReference>
<dbReference type="GO" id="GO:0006515">
    <property type="term" value="P:protein quality control for misfolded or incompletely synthesized proteins"/>
    <property type="evidence" value="ECO:0007669"/>
    <property type="project" value="UniProtKB-UniRule"/>
</dbReference>
<dbReference type="GO" id="GO:0072344">
    <property type="term" value="P:rescue of stalled ribosome"/>
    <property type="evidence" value="ECO:0007669"/>
    <property type="project" value="UniProtKB-UniRule"/>
</dbReference>
<dbReference type="CDD" id="cd00462">
    <property type="entry name" value="PTH"/>
    <property type="match status" value="1"/>
</dbReference>
<dbReference type="FunFam" id="3.40.50.1470:FF:000001">
    <property type="entry name" value="Peptidyl-tRNA hydrolase"/>
    <property type="match status" value="1"/>
</dbReference>
<dbReference type="Gene3D" id="3.40.50.1470">
    <property type="entry name" value="Peptidyl-tRNA hydrolase"/>
    <property type="match status" value="1"/>
</dbReference>
<dbReference type="HAMAP" id="MF_00083">
    <property type="entry name" value="Pept_tRNA_hydro_bact"/>
    <property type="match status" value="1"/>
</dbReference>
<dbReference type="InterPro" id="IPR001328">
    <property type="entry name" value="Pept_tRNA_hydro"/>
</dbReference>
<dbReference type="InterPro" id="IPR018171">
    <property type="entry name" value="Pept_tRNA_hydro_CS"/>
</dbReference>
<dbReference type="InterPro" id="IPR036416">
    <property type="entry name" value="Pept_tRNA_hydro_sf"/>
</dbReference>
<dbReference type="NCBIfam" id="TIGR00447">
    <property type="entry name" value="pth"/>
    <property type="match status" value="1"/>
</dbReference>
<dbReference type="PANTHER" id="PTHR17224">
    <property type="entry name" value="PEPTIDYL-TRNA HYDROLASE"/>
    <property type="match status" value="1"/>
</dbReference>
<dbReference type="PANTHER" id="PTHR17224:SF1">
    <property type="entry name" value="PEPTIDYL-TRNA HYDROLASE"/>
    <property type="match status" value="1"/>
</dbReference>
<dbReference type="Pfam" id="PF01195">
    <property type="entry name" value="Pept_tRNA_hydro"/>
    <property type="match status" value="1"/>
</dbReference>
<dbReference type="SUPFAM" id="SSF53178">
    <property type="entry name" value="Peptidyl-tRNA hydrolase-like"/>
    <property type="match status" value="1"/>
</dbReference>
<dbReference type="PROSITE" id="PS01195">
    <property type="entry name" value="PEPT_TRNA_HYDROL_1"/>
    <property type="match status" value="1"/>
</dbReference>
<dbReference type="PROSITE" id="PS01196">
    <property type="entry name" value="PEPT_TRNA_HYDROL_2"/>
    <property type="match status" value="1"/>
</dbReference>
<proteinExistence type="inferred from homology"/>
<evidence type="ECO:0000255" key="1">
    <source>
        <dbReference type="HAMAP-Rule" id="MF_00083"/>
    </source>
</evidence>
<gene>
    <name evidence="1" type="primary">pth</name>
    <name type="ordered locus">Spro_1984</name>
</gene>
<keyword id="KW-0963">Cytoplasm</keyword>
<keyword id="KW-0378">Hydrolase</keyword>
<keyword id="KW-0694">RNA-binding</keyword>
<keyword id="KW-0820">tRNA-binding</keyword>
<feature type="chain" id="PRO_1000057554" description="Peptidyl-tRNA hydrolase">
    <location>
        <begin position="1"/>
        <end position="196"/>
    </location>
</feature>
<feature type="active site" description="Proton acceptor" evidence="1">
    <location>
        <position position="22"/>
    </location>
</feature>
<feature type="binding site" evidence="1">
    <location>
        <position position="17"/>
    </location>
    <ligand>
        <name>tRNA</name>
        <dbReference type="ChEBI" id="CHEBI:17843"/>
    </ligand>
</feature>
<feature type="binding site" evidence="1">
    <location>
        <position position="68"/>
    </location>
    <ligand>
        <name>tRNA</name>
        <dbReference type="ChEBI" id="CHEBI:17843"/>
    </ligand>
</feature>
<feature type="binding site" evidence="1">
    <location>
        <position position="70"/>
    </location>
    <ligand>
        <name>tRNA</name>
        <dbReference type="ChEBI" id="CHEBI:17843"/>
    </ligand>
</feature>
<feature type="binding site" evidence="1">
    <location>
        <position position="116"/>
    </location>
    <ligand>
        <name>tRNA</name>
        <dbReference type="ChEBI" id="CHEBI:17843"/>
    </ligand>
</feature>
<feature type="site" description="Discriminates between blocked and unblocked aminoacyl-tRNA" evidence="1">
    <location>
        <position position="12"/>
    </location>
</feature>
<feature type="site" description="Stabilizes the basic form of H active site to accept a proton" evidence="1">
    <location>
        <position position="95"/>
    </location>
</feature>
<reference key="1">
    <citation type="submission" date="2007-09" db="EMBL/GenBank/DDBJ databases">
        <title>Complete sequence of chromosome of Serratia proteamaculans 568.</title>
        <authorList>
            <consortium name="US DOE Joint Genome Institute"/>
            <person name="Copeland A."/>
            <person name="Lucas S."/>
            <person name="Lapidus A."/>
            <person name="Barry K."/>
            <person name="Glavina del Rio T."/>
            <person name="Dalin E."/>
            <person name="Tice H."/>
            <person name="Pitluck S."/>
            <person name="Chain P."/>
            <person name="Malfatti S."/>
            <person name="Shin M."/>
            <person name="Vergez L."/>
            <person name="Schmutz J."/>
            <person name="Larimer F."/>
            <person name="Land M."/>
            <person name="Hauser L."/>
            <person name="Kyrpides N."/>
            <person name="Kim E."/>
            <person name="Taghavi S."/>
            <person name="Newman L."/>
            <person name="Vangronsveld J."/>
            <person name="van der Lelie D."/>
            <person name="Richardson P."/>
        </authorList>
    </citation>
    <scope>NUCLEOTIDE SEQUENCE [LARGE SCALE GENOMIC DNA]</scope>
    <source>
        <strain>568</strain>
    </source>
</reference>
<name>PTH_SERP5</name>
<comment type="function">
    <text evidence="1">Hydrolyzes ribosome-free peptidyl-tRNAs (with 1 or more amino acids incorporated), which drop off the ribosome during protein synthesis, or as a result of ribosome stalling.</text>
</comment>
<comment type="function">
    <text evidence="1">Catalyzes the release of premature peptidyl moieties from peptidyl-tRNA molecules trapped in stalled 50S ribosomal subunits, and thus maintains levels of free tRNAs and 50S ribosomes.</text>
</comment>
<comment type="catalytic activity">
    <reaction evidence="1">
        <text>an N-acyl-L-alpha-aminoacyl-tRNA + H2O = an N-acyl-L-amino acid + a tRNA + H(+)</text>
        <dbReference type="Rhea" id="RHEA:54448"/>
        <dbReference type="Rhea" id="RHEA-COMP:10123"/>
        <dbReference type="Rhea" id="RHEA-COMP:13883"/>
        <dbReference type="ChEBI" id="CHEBI:15377"/>
        <dbReference type="ChEBI" id="CHEBI:15378"/>
        <dbReference type="ChEBI" id="CHEBI:59874"/>
        <dbReference type="ChEBI" id="CHEBI:78442"/>
        <dbReference type="ChEBI" id="CHEBI:138191"/>
        <dbReference type="EC" id="3.1.1.29"/>
    </reaction>
</comment>
<comment type="subunit">
    <text evidence="1">Monomer.</text>
</comment>
<comment type="subcellular location">
    <subcellularLocation>
        <location evidence="1">Cytoplasm</location>
    </subcellularLocation>
</comment>
<comment type="similarity">
    <text evidence="1">Belongs to the PTH family.</text>
</comment>
<accession>A8GD97</accession>